<name>PLS5_PHAJA</name>
<comment type="function">
    <text evidence="1">Has antimicrobial activity.</text>
</comment>
<comment type="subcellular location">
    <subcellularLocation>
        <location evidence="3">Secreted</location>
    </subcellularLocation>
</comment>
<comment type="tissue specificity">
    <text evidence="3">Expressed by the skin glands.</text>
</comment>
<comment type="mass spectrometry"/>
<comment type="similarity">
    <text evidence="2">Belongs to the frog skin active peptide (FSAP) family. Phylloseptin subfamily.</text>
</comment>
<protein>
    <recommendedName>
        <fullName evidence="4">Phylloseptin-J5</fullName>
        <shortName evidence="4">PLS-J5</shortName>
        <shortName>PS-J5</shortName>
    </recommendedName>
</protein>
<keyword id="KW-0027">Amidation</keyword>
<keyword id="KW-0878">Amphibian defense peptide</keyword>
<keyword id="KW-0929">Antimicrobial</keyword>
<keyword id="KW-0903">Direct protein sequencing</keyword>
<keyword id="KW-0964">Secreted</keyword>
<evidence type="ECO:0000250" key="1">
    <source>
        <dbReference type="UniProtKB" id="P84572"/>
    </source>
</evidence>
<evidence type="ECO:0000255" key="2"/>
<evidence type="ECO:0000269" key="3">
    <source>
    </source>
</evidence>
<evidence type="ECO:0000303" key="4">
    <source>
    </source>
</evidence>
<evidence type="ECO:0000305" key="5"/>
<feature type="peptide" id="PRO_0000404624" description="Phylloseptin-J5" evidence="1 5">
    <location>
        <begin position="1"/>
        <end position="19"/>
    </location>
</feature>
<feature type="modified residue" description="Leucine amide" evidence="3">
    <location>
        <position position="19"/>
    </location>
</feature>
<feature type="unsure residue" description="L or I" evidence="3">
    <location>
        <position position="2"/>
    </location>
</feature>
<feature type="unsure residue" description="L or I" evidence="3">
    <location>
        <position position="4"/>
    </location>
</feature>
<feature type="unsure residue" description="I or L" evidence="3">
    <location>
        <position position="5"/>
    </location>
</feature>
<feature type="unsure residue" description="I or L" evidence="3">
    <location>
        <position position="9"/>
    </location>
</feature>
<feature type="unsure residue" description="I or L" evidence="3">
    <location>
        <position position="12"/>
    </location>
</feature>
<feature type="unsure residue" description="I or L" evidence="3">
    <location>
        <position position="15"/>
    </location>
</feature>
<feature type="unsure residue" description="L or I" evidence="3">
    <location>
        <position position="19"/>
    </location>
</feature>
<accession>P86618</accession>
<proteinExistence type="evidence at protein level"/>
<dbReference type="GO" id="GO:0005576">
    <property type="term" value="C:extracellular region"/>
    <property type="evidence" value="ECO:0007669"/>
    <property type="project" value="UniProtKB-SubCell"/>
</dbReference>
<dbReference type="GO" id="GO:0006952">
    <property type="term" value="P:defense response"/>
    <property type="evidence" value="ECO:0007669"/>
    <property type="project" value="UniProtKB-KW"/>
</dbReference>
<sequence>FLSLIPHAISAISAIAHHL</sequence>
<organism>
    <name type="scientific">Phasmahyla jandaia</name>
    <name type="common">Jandaia leaf frog</name>
    <name type="synonym">Phyllomedusa jandaia</name>
    <dbReference type="NCBI Taxonomy" id="762504"/>
    <lineage>
        <taxon>Eukaryota</taxon>
        <taxon>Metazoa</taxon>
        <taxon>Chordata</taxon>
        <taxon>Craniata</taxon>
        <taxon>Vertebrata</taxon>
        <taxon>Euteleostomi</taxon>
        <taxon>Amphibia</taxon>
        <taxon>Batrachia</taxon>
        <taxon>Anura</taxon>
        <taxon>Neobatrachia</taxon>
        <taxon>Hyloidea</taxon>
        <taxon>Hylidae</taxon>
        <taxon>Phyllomedusinae</taxon>
        <taxon>Phasmahyla</taxon>
    </lineage>
</organism>
<reference evidence="5" key="1">
    <citation type="journal article" date="2011" name="Toxicon">
        <title>Peptidomic dissection of the skin secretion of Phasmahyla jandaia (Bokermann and Sazima, 1978) (Anura, Hylidae, Phyllomedusinae).</title>
        <authorList>
            <person name="Rates B."/>
            <person name="Silva L.P."/>
            <person name="Ireno I.C."/>
            <person name="Leite F.S."/>
            <person name="Borges M.H."/>
            <person name="Bloch C. Jr."/>
            <person name="De Lima M.E."/>
            <person name="Pimenta A.M."/>
        </authorList>
    </citation>
    <scope>PROTEIN SEQUENCE</scope>
    <scope>SUBCELLULAR LOCATION</scope>
    <scope>TISSUE SPECIFICITY</scope>
    <scope>MASS SPECTROMETRY</scope>
    <scope>AMIDATION AT LEU-19</scope>
    <source>
        <tissue evidence="3">Skin secretion</tissue>
    </source>
</reference>